<feature type="chain" id="PRO_0000300305" description="DNA-directed RNA polymerase subunit beta">
    <location>
        <begin position="1"/>
        <end position="1291"/>
    </location>
</feature>
<sequence>MATNNTQNLRKSFAKTRSTVEYPDFLDIQVRSFKDFFQIDTPAENRFKEGLYKVFAENFPISDSRDNFILDFIDYNIDTPKYNVDECIDRGLTYAVPLKAKLRLTCNDKDNEDFQTIEQEVFLGNIPYMTERGSFVINGAERVIVSQLHRSPGVFFAQSKHTNGTKLYSARVIPFKGSWIEFATDVNNVMFAYIDRKKKFPVTTLLRAIGYGSDKDILDLFGLSEEVEATKANIKKAIGRKLAARVLRTWTEDFVDEDTGEVVSIDRNEVLLERDSIIKEEDINIIVESGSKSIILHREDVNIADYTIIYNTLQKDNSNSEKEAVEQIYRQLRNTDAPDEQTARDIIHNLFFSDKRYDLGEVGRYRINKKLGSGMGSEVKVLTKEDIINIVKYLIGLINSRAVVDDIDHLSNRRVRTMGEQLYSQFSVGLARMARTIKERMNVRDNEDFKPVDLINARTLSSVINSFFGTNQLSQFMDQTNPLAEITHKRRMSALGPGGLSRERAGFEVRDVHYTHYGRLCTIETPEGPNIGLISSLCVHAKVNSMGFIETPYRKVIDGIVDVKNQPVFLTAEEEDGAHIAQANAMYDDNGNFISDRIKARYEGDFPVIAPDKVDLIDIATNQIVSVAASLIPFLEHDDANRALMGSNMQRQAVPLLRPEAPIVGTGLERRVAMDSRTLLIAEADGVVEFVDANEIKMRYDLTDEDRLVSFDSDIITYSLIKFRRTNQDTCINLKPVIQHGERVKKGQVLCEGYATDKGELALGRNLMVAFMPWQGYNFEDAIVISEKVVRDDIFTSIHIEEFELEVRDTKRGEEELTSEIPNVSEEAVKNLDENGIIRTGAEIKEGDILIGKITPKGESDPTPEEKLLRAIFGDKAGDVKDASMKAPPSLRGVVIDTKLFSRPKKDKDLRIKSKKQVETIKGKYSKDLLALREQMIEKLAALLDGQTSQGVKHKFGDEVISKGVKFSRKNIEANVFPDKNPYRDESNYNVQEEANLLGDLIIDNWTSDKKINENVLRLVKNYLTKRNETAGKFKRERFTLEVGDELPAGIVQLAKVYIAKKRKLKVGDKMAGRHGNKGVVARIVRDEDMPFLEDGTPVDIVLNPLGVPSRMNIGQIYETLLGLAGKKLGRKYATPIFDGASEEEVINELRDAGLPTIGRTKLVDGLSGNPFDQPVTVGVIYMMKLGHLVDDKMHARSIGPYSLITQQPLGGKAQFGGQRFGEMEVWALEAFGAANILQEILTVKSDDVVGRAKTYECIVKGENLPRPNIPESFNVLVHELRGLALEITLH</sequence>
<name>RPOB_CYTH3</name>
<gene>
    <name evidence="1" type="primary">rpoB</name>
    <name type="ordered locus">CHU_3169</name>
</gene>
<accession>Q11QA5</accession>
<evidence type="ECO:0000255" key="1">
    <source>
        <dbReference type="HAMAP-Rule" id="MF_01321"/>
    </source>
</evidence>
<protein>
    <recommendedName>
        <fullName evidence="1">DNA-directed RNA polymerase subunit beta</fullName>
        <shortName evidence="1">RNAP subunit beta</shortName>
        <ecNumber evidence="1">2.7.7.6</ecNumber>
    </recommendedName>
    <alternativeName>
        <fullName evidence="1">RNA polymerase subunit beta</fullName>
    </alternativeName>
    <alternativeName>
        <fullName evidence="1">Transcriptase subunit beta</fullName>
    </alternativeName>
</protein>
<comment type="function">
    <text evidence="1">DNA-dependent RNA polymerase catalyzes the transcription of DNA into RNA using the four ribonucleoside triphosphates as substrates.</text>
</comment>
<comment type="catalytic activity">
    <reaction evidence="1">
        <text>RNA(n) + a ribonucleoside 5'-triphosphate = RNA(n+1) + diphosphate</text>
        <dbReference type="Rhea" id="RHEA:21248"/>
        <dbReference type="Rhea" id="RHEA-COMP:14527"/>
        <dbReference type="Rhea" id="RHEA-COMP:17342"/>
        <dbReference type="ChEBI" id="CHEBI:33019"/>
        <dbReference type="ChEBI" id="CHEBI:61557"/>
        <dbReference type="ChEBI" id="CHEBI:140395"/>
        <dbReference type="EC" id="2.7.7.6"/>
    </reaction>
</comment>
<comment type="subunit">
    <text evidence="1">The RNAP catalytic core consists of 2 alpha, 1 beta, 1 beta' and 1 omega subunit. When a sigma factor is associated with the core the holoenzyme is formed, which can initiate transcription.</text>
</comment>
<comment type="similarity">
    <text evidence="1">Belongs to the RNA polymerase beta chain family.</text>
</comment>
<organism>
    <name type="scientific">Cytophaga hutchinsonii (strain ATCC 33406 / DSM 1761 / CIP 103989 / NBRC 15051 / NCIMB 9469 / D465)</name>
    <dbReference type="NCBI Taxonomy" id="269798"/>
    <lineage>
        <taxon>Bacteria</taxon>
        <taxon>Pseudomonadati</taxon>
        <taxon>Bacteroidota</taxon>
        <taxon>Cytophagia</taxon>
        <taxon>Cytophagales</taxon>
        <taxon>Cytophagaceae</taxon>
        <taxon>Cytophaga</taxon>
    </lineage>
</organism>
<keyword id="KW-0240">DNA-directed RNA polymerase</keyword>
<keyword id="KW-0548">Nucleotidyltransferase</keyword>
<keyword id="KW-1185">Reference proteome</keyword>
<keyword id="KW-0804">Transcription</keyword>
<keyword id="KW-0808">Transferase</keyword>
<proteinExistence type="inferred from homology"/>
<dbReference type="EC" id="2.7.7.6" evidence="1"/>
<dbReference type="EMBL" id="CP000383">
    <property type="protein sequence ID" value="ABG60409.1"/>
    <property type="molecule type" value="Genomic_DNA"/>
</dbReference>
<dbReference type="RefSeq" id="WP_011586518.1">
    <property type="nucleotide sequence ID" value="NC_008255.1"/>
</dbReference>
<dbReference type="SMR" id="Q11QA5"/>
<dbReference type="STRING" id="269798.CHU_3169"/>
<dbReference type="KEGG" id="chu:CHU_3169"/>
<dbReference type="eggNOG" id="COG0085">
    <property type="taxonomic scope" value="Bacteria"/>
</dbReference>
<dbReference type="HOGENOM" id="CLU_000524_4_1_10"/>
<dbReference type="OrthoDB" id="9803954at2"/>
<dbReference type="Proteomes" id="UP000001822">
    <property type="component" value="Chromosome"/>
</dbReference>
<dbReference type="GO" id="GO:0000428">
    <property type="term" value="C:DNA-directed RNA polymerase complex"/>
    <property type="evidence" value="ECO:0007669"/>
    <property type="project" value="UniProtKB-KW"/>
</dbReference>
<dbReference type="GO" id="GO:0003677">
    <property type="term" value="F:DNA binding"/>
    <property type="evidence" value="ECO:0007669"/>
    <property type="project" value="UniProtKB-UniRule"/>
</dbReference>
<dbReference type="GO" id="GO:0003899">
    <property type="term" value="F:DNA-directed RNA polymerase activity"/>
    <property type="evidence" value="ECO:0007669"/>
    <property type="project" value="UniProtKB-UniRule"/>
</dbReference>
<dbReference type="GO" id="GO:0032549">
    <property type="term" value="F:ribonucleoside binding"/>
    <property type="evidence" value="ECO:0007669"/>
    <property type="project" value="InterPro"/>
</dbReference>
<dbReference type="GO" id="GO:0006351">
    <property type="term" value="P:DNA-templated transcription"/>
    <property type="evidence" value="ECO:0007669"/>
    <property type="project" value="UniProtKB-UniRule"/>
</dbReference>
<dbReference type="CDD" id="cd00653">
    <property type="entry name" value="RNA_pol_B_RPB2"/>
    <property type="match status" value="1"/>
</dbReference>
<dbReference type="Gene3D" id="2.40.50.100">
    <property type="match status" value="1"/>
</dbReference>
<dbReference type="Gene3D" id="2.40.50.150">
    <property type="match status" value="1"/>
</dbReference>
<dbReference type="Gene3D" id="3.90.1100.10">
    <property type="match status" value="1"/>
</dbReference>
<dbReference type="Gene3D" id="2.30.150.10">
    <property type="entry name" value="DNA-directed RNA polymerase, beta subunit, external 1 domain"/>
    <property type="match status" value="1"/>
</dbReference>
<dbReference type="Gene3D" id="2.40.270.10">
    <property type="entry name" value="DNA-directed RNA polymerase, subunit 2, domain 6"/>
    <property type="match status" value="2"/>
</dbReference>
<dbReference type="Gene3D" id="3.90.1800.10">
    <property type="entry name" value="RNA polymerase alpha subunit dimerisation domain"/>
    <property type="match status" value="1"/>
</dbReference>
<dbReference type="Gene3D" id="3.90.1110.10">
    <property type="entry name" value="RNA polymerase Rpb2, domain 2"/>
    <property type="match status" value="1"/>
</dbReference>
<dbReference type="HAMAP" id="MF_01321">
    <property type="entry name" value="RNApol_bact_RpoB"/>
    <property type="match status" value="1"/>
</dbReference>
<dbReference type="InterPro" id="IPR042107">
    <property type="entry name" value="DNA-dir_RNA_pol_bsu_ext_1_sf"/>
</dbReference>
<dbReference type="InterPro" id="IPR019462">
    <property type="entry name" value="DNA-dir_RNA_pol_bsu_external_1"/>
</dbReference>
<dbReference type="InterPro" id="IPR015712">
    <property type="entry name" value="DNA-dir_RNA_pol_su2"/>
</dbReference>
<dbReference type="InterPro" id="IPR007120">
    <property type="entry name" value="DNA-dir_RNAP_su2_dom"/>
</dbReference>
<dbReference type="InterPro" id="IPR037033">
    <property type="entry name" value="DNA-dir_RNAP_su2_hyb_sf"/>
</dbReference>
<dbReference type="InterPro" id="IPR010243">
    <property type="entry name" value="RNA_pol_bsu_bac"/>
</dbReference>
<dbReference type="InterPro" id="IPR007121">
    <property type="entry name" value="RNA_pol_bsu_CS"/>
</dbReference>
<dbReference type="InterPro" id="IPR007644">
    <property type="entry name" value="RNA_pol_bsu_protrusion"/>
</dbReference>
<dbReference type="InterPro" id="IPR007642">
    <property type="entry name" value="RNA_pol_Rpb2_2"/>
</dbReference>
<dbReference type="InterPro" id="IPR037034">
    <property type="entry name" value="RNA_pol_Rpb2_2_sf"/>
</dbReference>
<dbReference type="InterPro" id="IPR007645">
    <property type="entry name" value="RNA_pol_Rpb2_3"/>
</dbReference>
<dbReference type="InterPro" id="IPR007641">
    <property type="entry name" value="RNA_pol_Rpb2_7"/>
</dbReference>
<dbReference type="InterPro" id="IPR014724">
    <property type="entry name" value="RNA_pol_RPB2_OB-fold"/>
</dbReference>
<dbReference type="NCBIfam" id="NF001616">
    <property type="entry name" value="PRK00405.1"/>
    <property type="match status" value="1"/>
</dbReference>
<dbReference type="NCBIfam" id="TIGR02013">
    <property type="entry name" value="rpoB"/>
    <property type="match status" value="1"/>
</dbReference>
<dbReference type="PANTHER" id="PTHR20856">
    <property type="entry name" value="DNA-DIRECTED RNA POLYMERASE I SUBUNIT 2"/>
    <property type="match status" value="1"/>
</dbReference>
<dbReference type="Pfam" id="PF04563">
    <property type="entry name" value="RNA_pol_Rpb2_1"/>
    <property type="match status" value="1"/>
</dbReference>
<dbReference type="Pfam" id="PF04561">
    <property type="entry name" value="RNA_pol_Rpb2_2"/>
    <property type="match status" value="2"/>
</dbReference>
<dbReference type="Pfam" id="PF04565">
    <property type="entry name" value="RNA_pol_Rpb2_3"/>
    <property type="match status" value="1"/>
</dbReference>
<dbReference type="Pfam" id="PF10385">
    <property type="entry name" value="RNA_pol_Rpb2_45"/>
    <property type="match status" value="1"/>
</dbReference>
<dbReference type="Pfam" id="PF00562">
    <property type="entry name" value="RNA_pol_Rpb2_6"/>
    <property type="match status" value="1"/>
</dbReference>
<dbReference type="Pfam" id="PF04560">
    <property type="entry name" value="RNA_pol_Rpb2_7"/>
    <property type="match status" value="1"/>
</dbReference>
<dbReference type="SUPFAM" id="SSF64484">
    <property type="entry name" value="beta and beta-prime subunits of DNA dependent RNA-polymerase"/>
    <property type="match status" value="1"/>
</dbReference>
<dbReference type="PROSITE" id="PS01166">
    <property type="entry name" value="RNA_POL_BETA"/>
    <property type="match status" value="1"/>
</dbReference>
<reference key="1">
    <citation type="journal article" date="2007" name="Appl. Environ. Microbiol.">
        <title>Genome sequence of the cellulolytic gliding bacterium Cytophaga hutchinsonii.</title>
        <authorList>
            <person name="Xie G."/>
            <person name="Bruce D.C."/>
            <person name="Challacombe J.F."/>
            <person name="Chertkov O."/>
            <person name="Detter J.C."/>
            <person name="Gilna P."/>
            <person name="Han C.S."/>
            <person name="Lucas S."/>
            <person name="Misra M."/>
            <person name="Myers G.L."/>
            <person name="Richardson P."/>
            <person name="Tapia R."/>
            <person name="Thayer N."/>
            <person name="Thompson L.S."/>
            <person name="Brettin T.S."/>
            <person name="Henrissat B."/>
            <person name="Wilson D.B."/>
            <person name="McBride M.J."/>
        </authorList>
    </citation>
    <scope>NUCLEOTIDE SEQUENCE [LARGE SCALE GENOMIC DNA]</scope>
    <source>
        <strain>ATCC 33406 / DSM 1761 / JCM 20678 / CIP 103989 / IAM 12607 / NBRC 15051 / NCIMB 9469 / D465</strain>
    </source>
</reference>